<sequence>MPRKTETYKSIMLKLENIVASMDSSELSLENSLKSYEEGVKLCNKLYKILNEAEEKIKVLTEEGERDFDIES</sequence>
<keyword id="KW-0963">Cytoplasm</keyword>
<keyword id="KW-0269">Exonuclease</keyword>
<keyword id="KW-0378">Hydrolase</keyword>
<keyword id="KW-0540">Nuclease</keyword>
<feature type="chain" id="PRO_1000200247" description="Exodeoxyribonuclease 7 small subunit">
    <location>
        <begin position="1"/>
        <end position="72"/>
    </location>
</feature>
<organism>
    <name type="scientific">Clostridium kluyveri (strain NBRC 12016)</name>
    <dbReference type="NCBI Taxonomy" id="583346"/>
    <lineage>
        <taxon>Bacteria</taxon>
        <taxon>Bacillati</taxon>
        <taxon>Bacillota</taxon>
        <taxon>Clostridia</taxon>
        <taxon>Eubacteriales</taxon>
        <taxon>Clostridiaceae</taxon>
        <taxon>Clostridium</taxon>
    </lineage>
</organism>
<evidence type="ECO:0000255" key="1">
    <source>
        <dbReference type="HAMAP-Rule" id="MF_00337"/>
    </source>
</evidence>
<reference key="1">
    <citation type="submission" date="2005-09" db="EMBL/GenBank/DDBJ databases">
        <title>Complete genome sequence of Clostridium kluyveri and comparative genomics of Clostridia species.</title>
        <authorList>
            <person name="Inui M."/>
            <person name="Nonaka H."/>
            <person name="Shinoda Y."/>
            <person name="Ikenaga Y."/>
            <person name="Abe M."/>
            <person name="Naito K."/>
            <person name="Vertes A.A."/>
            <person name="Yukawa H."/>
        </authorList>
    </citation>
    <scope>NUCLEOTIDE SEQUENCE [LARGE SCALE GENOMIC DNA]</scope>
    <source>
        <strain>NBRC 12016</strain>
    </source>
</reference>
<dbReference type="EC" id="3.1.11.6" evidence="1"/>
<dbReference type="EMBL" id="AP009049">
    <property type="protein sequence ID" value="BAH06177.1"/>
    <property type="molecule type" value="Genomic_DNA"/>
</dbReference>
<dbReference type="RefSeq" id="WP_012101612.1">
    <property type="nucleotide sequence ID" value="NC_011837.1"/>
</dbReference>
<dbReference type="SMR" id="B9E102"/>
<dbReference type="KEGG" id="ckr:CKR_1126"/>
<dbReference type="HOGENOM" id="CLU_145918_3_2_9"/>
<dbReference type="Proteomes" id="UP000007969">
    <property type="component" value="Chromosome"/>
</dbReference>
<dbReference type="GO" id="GO:0005829">
    <property type="term" value="C:cytosol"/>
    <property type="evidence" value="ECO:0007669"/>
    <property type="project" value="TreeGrafter"/>
</dbReference>
<dbReference type="GO" id="GO:0009318">
    <property type="term" value="C:exodeoxyribonuclease VII complex"/>
    <property type="evidence" value="ECO:0007669"/>
    <property type="project" value="InterPro"/>
</dbReference>
<dbReference type="GO" id="GO:0008855">
    <property type="term" value="F:exodeoxyribonuclease VII activity"/>
    <property type="evidence" value="ECO:0007669"/>
    <property type="project" value="UniProtKB-UniRule"/>
</dbReference>
<dbReference type="GO" id="GO:0006308">
    <property type="term" value="P:DNA catabolic process"/>
    <property type="evidence" value="ECO:0007669"/>
    <property type="project" value="UniProtKB-UniRule"/>
</dbReference>
<dbReference type="Gene3D" id="1.10.287.1040">
    <property type="entry name" value="Exonuclease VII, small subunit"/>
    <property type="match status" value="1"/>
</dbReference>
<dbReference type="HAMAP" id="MF_00337">
    <property type="entry name" value="Exonuc_7_S"/>
    <property type="match status" value="1"/>
</dbReference>
<dbReference type="InterPro" id="IPR003761">
    <property type="entry name" value="Exonuc_VII_S"/>
</dbReference>
<dbReference type="InterPro" id="IPR037004">
    <property type="entry name" value="Exonuc_VII_ssu_sf"/>
</dbReference>
<dbReference type="NCBIfam" id="NF002140">
    <property type="entry name" value="PRK00977.1-4"/>
    <property type="match status" value="1"/>
</dbReference>
<dbReference type="NCBIfam" id="TIGR01280">
    <property type="entry name" value="xseB"/>
    <property type="match status" value="1"/>
</dbReference>
<dbReference type="PANTHER" id="PTHR34137">
    <property type="entry name" value="EXODEOXYRIBONUCLEASE 7 SMALL SUBUNIT"/>
    <property type="match status" value="1"/>
</dbReference>
<dbReference type="PANTHER" id="PTHR34137:SF1">
    <property type="entry name" value="EXODEOXYRIBONUCLEASE 7 SMALL SUBUNIT"/>
    <property type="match status" value="1"/>
</dbReference>
<dbReference type="Pfam" id="PF02609">
    <property type="entry name" value="Exonuc_VII_S"/>
    <property type="match status" value="1"/>
</dbReference>
<dbReference type="PIRSF" id="PIRSF006488">
    <property type="entry name" value="Exonuc_VII_S"/>
    <property type="match status" value="1"/>
</dbReference>
<dbReference type="SUPFAM" id="SSF116842">
    <property type="entry name" value="XseB-like"/>
    <property type="match status" value="1"/>
</dbReference>
<gene>
    <name evidence="1" type="primary">xseB</name>
    <name type="ordered locus">CKR_1126</name>
</gene>
<accession>B9E102</accession>
<comment type="function">
    <text evidence="1">Bidirectionally degrades single-stranded DNA into large acid-insoluble oligonucleotides, which are then degraded further into small acid-soluble oligonucleotides.</text>
</comment>
<comment type="catalytic activity">
    <reaction evidence="1">
        <text>Exonucleolytic cleavage in either 5'- to 3'- or 3'- to 5'-direction to yield nucleoside 5'-phosphates.</text>
        <dbReference type="EC" id="3.1.11.6"/>
    </reaction>
</comment>
<comment type="subunit">
    <text evidence="1">Heterooligomer composed of large and small subunits.</text>
</comment>
<comment type="subcellular location">
    <subcellularLocation>
        <location evidence="1">Cytoplasm</location>
    </subcellularLocation>
</comment>
<comment type="similarity">
    <text evidence="1">Belongs to the XseB family.</text>
</comment>
<protein>
    <recommendedName>
        <fullName evidence="1">Exodeoxyribonuclease 7 small subunit</fullName>
        <ecNumber evidence="1">3.1.11.6</ecNumber>
    </recommendedName>
    <alternativeName>
        <fullName evidence="1">Exodeoxyribonuclease VII small subunit</fullName>
        <shortName evidence="1">Exonuclease VII small subunit</shortName>
    </alternativeName>
</protein>
<proteinExistence type="inferred from homology"/>
<name>EX7S_CLOK1</name>